<organism>
    <name type="scientific">Schizosaccharomyces pombe (strain 972 / ATCC 24843)</name>
    <name type="common">Fission yeast</name>
    <dbReference type="NCBI Taxonomy" id="284812"/>
    <lineage>
        <taxon>Eukaryota</taxon>
        <taxon>Fungi</taxon>
        <taxon>Dikarya</taxon>
        <taxon>Ascomycota</taxon>
        <taxon>Taphrinomycotina</taxon>
        <taxon>Schizosaccharomycetes</taxon>
        <taxon>Schizosaccharomycetales</taxon>
        <taxon>Schizosaccharomycetaceae</taxon>
        <taxon>Schizosaccharomyces</taxon>
    </lineage>
</organism>
<name>MTU1_SCHPO</name>
<reference key="1">
    <citation type="journal article" date="2002" name="Nature">
        <title>The genome sequence of Schizosaccharomyces pombe.</title>
        <authorList>
            <person name="Wood V."/>
            <person name="Gwilliam R."/>
            <person name="Rajandream M.A."/>
            <person name="Lyne M.H."/>
            <person name="Lyne R."/>
            <person name="Stewart A."/>
            <person name="Sgouros J.G."/>
            <person name="Peat N."/>
            <person name="Hayles J."/>
            <person name="Baker S.G."/>
            <person name="Basham D."/>
            <person name="Bowman S."/>
            <person name="Brooks K."/>
            <person name="Brown D."/>
            <person name="Brown S."/>
            <person name="Chillingworth T."/>
            <person name="Churcher C.M."/>
            <person name="Collins M."/>
            <person name="Connor R."/>
            <person name="Cronin A."/>
            <person name="Davis P."/>
            <person name="Feltwell T."/>
            <person name="Fraser A."/>
            <person name="Gentles S."/>
            <person name="Goble A."/>
            <person name="Hamlin N."/>
            <person name="Harris D.E."/>
            <person name="Hidalgo J."/>
            <person name="Hodgson G."/>
            <person name="Holroyd S."/>
            <person name="Hornsby T."/>
            <person name="Howarth S."/>
            <person name="Huckle E.J."/>
            <person name="Hunt S."/>
            <person name="Jagels K."/>
            <person name="James K.D."/>
            <person name="Jones L."/>
            <person name="Jones M."/>
            <person name="Leather S."/>
            <person name="McDonald S."/>
            <person name="McLean J."/>
            <person name="Mooney P."/>
            <person name="Moule S."/>
            <person name="Mungall K.L."/>
            <person name="Murphy L.D."/>
            <person name="Niblett D."/>
            <person name="Odell C."/>
            <person name="Oliver K."/>
            <person name="O'Neil S."/>
            <person name="Pearson D."/>
            <person name="Quail M.A."/>
            <person name="Rabbinowitsch E."/>
            <person name="Rutherford K.M."/>
            <person name="Rutter S."/>
            <person name="Saunders D."/>
            <person name="Seeger K."/>
            <person name="Sharp S."/>
            <person name="Skelton J."/>
            <person name="Simmonds M.N."/>
            <person name="Squares R."/>
            <person name="Squares S."/>
            <person name="Stevens K."/>
            <person name="Taylor K."/>
            <person name="Taylor R.G."/>
            <person name="Tivey A."/>
            <person name="Walsh S.V."/>
            <person name="Warren T."/>
            <person name="Whitehead S."/>
            <person name="Woodward J.R."/>
            <person name="Volckaert G."/>
            <person name="Aert R."/>
            <person name="Robben J."/>
            <person name="Grymonprez B."/>
            <person name="Weltjens I."/>
            <person name="Vanstreels E."/>
            <person name="Rieger M."/>
            <person name="Schaefer M."/>
            <person name="Mueller-Auer S."/>
            <person name="Gabel C."/>
            <person name="Fuchs M."/>
            <person name="Duesterhoeft A."/>
            <person name="Fritzc C."/>
            <person name="Holzer E."/>
            <person name="Moestl D."/>
            <person name="Hilbert H."/>
            <person name="Borzym K."/>
            <person name="Langer I."/>
            <person name="Beck A."/>
            <person name="Lehrach H."/>
            <person name="Reinhardt R."/>
            <person name="Pohl T.M."/>
            <person name="Eger P."/>
            <person name="Zimmermann W."/>
            <person name="Wedler H."/>
            <person name="Wambutt R."/>
            <person name="Purnelle B."/>
            <person name="Goffeau A."/>
            <person name="Cadieu E."/>
            <person name="Dreano S."/>
            <person name="Gloux S."/>
            <person name="Lelaure V."/>
            <person name="Mottier S."/>
            <person name="Galibert F."/>
            <person name="Aves S.J."/>
            <person name="Xiang Z."/>
            <person name="Hunt C."/>
            <person name="Moore K."/>
            <person name="Hurst S.M."/>
            <person name="Lucas M."/>
            <person name="Rochet M."/>
            <person name="Gaillardin C."/>
            <person name="Tallada V.A."/>
            <person name="Garzon A."/>
            <person name="Thode G."/>
            <person name="Daga R.R."/>
            <person name="Cruzado L."/>
            <person name="Jimenez J."/>
            <person name="Sanchez M."/>
            <person name="del Rey F."/>
            <person name="Benito J."/>
            <person name="Dominguez A."/>
            <person name="Revuelta J.L."/>
            <person name="Moreno S."/>
            <person name="Armstrong J."/>
            <person name="Forsburg S.L."/>
            <person name="Cerutti L."/>
            <person name="Lowe T."/>
            <person name="McCombie W.R."/>
            <person name="Paulsen I."/>
            <person name="Potashkin J."/>
            <person name="Shpakovski G.V."/>
            <person name="Ussery D."/>
            <person name="Barrell B.G."/>
            <person name="Nurse P."/>
        </authorList>
    </citation>
    <scope>NUCLEOTIDE SEQUENCE [LARGE SCALE GENOMIC DNA]</scope>
    <source>
        <strain>972 / ATCC 24843</strain>
    </source>
</reference>
<proteinExistence type="inferred from homology"/>
<gene>
    <name type="ORF">SPAC23H4.04</name>
</gene>
<protein>
    <recommendedName>
        <fullName>Mitochondrial tRNA-specific 2-thiouridylase 1</fullName>
        <ecNumber evidence="2">2.8.1.14</ecNumber>
    </recommendedName>
</protein>
<evidence type="ECO:0000250" key="1"/>
<evidence type="ECO:0000250" key="2">
    <source>
        <dbReference type="UniProtKB" id="Q12093"/>
    </source>
</evidence>
<evidence type="ECO:0000305" key="3"/>
<sequence length="415" mass="47627">MRVSLFLQKQIIECSKAFQPHSTRLQWPKSQDKVFVAMSGGVDSSFSAYLLKSQGYNVEGVFMRNWLDEDSAPSGCPAERDWATVQKVCKKLNISCRRFNFEKEYWNLVFEPSLDLYENGLTPNPDVSCNRQVKFGALFDALKKHCENNVKGDWWLASGHYAKSVVNIETNESHMCIPTDKRKDQTLFLCTIRKEALEKTIFPLHNWTKENVKKQASSAGFKEIAEKQESQGLCFVSPNVGRKFRKFLQRYLNFSDRPIKVIAGKNVVGEFSGNHGIWSLTVGERCGLSLPQAQSEYFGRWYVWKKDIKNNALYICRGTNNELLMSKCIYLKDWKWCGTKLQNLEKSALSCFVRVRHQQPLQPAKVTWRNPESVKIHFQDKQRAVTPGQVIAVYVNDVCLGGGMVDTVEPEKDFD</sequence>
<feature type="chain" id="PRO_0000121710" description="Mitochondrial tRNA-specific 2-thiouridylase 1">
    <location>
        <begin position="1"/>
        <end position="415"/>
    </location>
</feature>
<feature type="region of interest" description="Interaction with target base in tRNA" evidence="1">
    <location>
        <begin position="124"/>
        <end position="126"/>
    </location>
</feature>
<feature type="region of interest" description="Interaction with tRNA" evidence="1">
    <location>
        <begin position="183"/>
        <end position="185"/>
    </location>
</feature>
<feature type="region of interest" description="Interaction with tRNA" evidence="1">
    <location>
        <begin position="356"/>
        <end position="357"/>
    </location>
</feature>
<feature type="active site" description="Nucleophile" evidence="1">
    <location>
        <position position="129"/>
    </location>
</feature>
<feature type="active site" description="Cysteine persulfide intermediate" evidence="1">
    <location>
        <position position="234"/>
    </location>
</feature>
<feature type="binding site" evidence="1">
    <location>
        <begin position="37"/>
        <end position="44"/>
    </location>
    <ligand>
        <name>ATP</name>
        <dbReference type="ChEBI" id="CHEBI:30616"/>
    </ligand>
</feature>
<feature type="binding site" evidence="1">
    <location>
        <position position="63"/>
    </location>
    <ligand>
        <name>ATP</name>
        <dbReference type="ChEBI" id="CHEBI:30616"/>
    </ligand>
</feature>
<feature type="binding site" evidence="1">
    <location>
        <position position="159"/>
    </location>
    <ligand>
        <name>ATP</name>
        <dbReference type="ChEBI" id="CHEBI:30616"/>
    </ligand>
</feature>
<feature type="site" description="Interaction with tRNA" evidence="1">
    <location>
        <position position="160"/>
    </location>
</feature>
<feature type="site" description="Interaction with tRNA" evidence="1">
    <location>
        <position position="285"/>
    </location>
</feature>
<feature type="site" description="Interaction with tRNA" evidence="1">
    <location>
        <position position="389"/>
    </location>
</feature>
<feature type="disulfide bond" description="Alternate" evidence="1">
    <location>
        <begin position="129"/>
        <end position="234"/>
    </location>
</feature>
<accession>O13947</accession>
<comment type="function">
    <text evidence="2">Catalyzes the 2-thiolation of uridine at the wobble position (U34) of mitochondrial tRNA(Lys), tRNA(Glu) and tRNA(Gln). Required for the formation of 5-taurinomethyl-2-thiouridine (tm5s2U) of mitochondrial tRNA(Lys), tRNA(Glu), and tRNA(Gln) at the wobble position. ATP is required to activate the C2 atom of the wobble base.</text>
</comment>
<comment type="catalytic activity">
    <reaction evidence="2">
        <text>5-taurinomethyluridine(34) in tRNA + S-sulfanyl-L-cysteinyl-[protein] + AH2 + ATP = 5-taurinomethyl-2-thiouridine(34) in tRNA + L-cysteinyl-[protein] + A + AMP + diphosphate + H(+)</text>
        <dbReference type="Rhea" id="RHEA:47040"/>
        <dbReference type="Rhea" id="RHEA-COMP:10131"/>
        <dbReference type="Rhea" id="RHEA-COMP:11726"/>
        <dbReference type="Rhea" id="RHEA-COMP:11732"/>
        <dbReference type="Rhea" id="RHEA-COMP:11733"/>
        <dbReference type="ChEBI" id="CHEBI:13193"/>
        <dbReference type="ChEBI" id="CHEBI:15378"/>
        <dbReference type="ChEBI" id="CHEBI:17499"/>
        <dbReference type="ChEBI" id="CHEBI:29950"/>
        <dbReference type="ChEBI" id="CHEBI:30616"/>
        <dbReference type="ChEBI" id="CHEBI:33019"/>
        <dbReference type="ChEBI" id="CHEBI:61963"/>
        <dbReference type="ChEBI" id="CHEBI:87171"/>
        <dbReference type="ChEBI" id="CHEBI:87172"/>
        <dbReference type="ChEBI" id="CHEBI:456215"/>
        <dbReference type="EC" id="2.8.1.14"/>
    </reaction>
</comment>
<comment type="subcellular location">
    <subcellularLocation>
        <location evidence="1">Mitochondrion</location>
    </subcellularLocation>
</comment>
<comment type="miscellaneous">
    <text evidence="1">During the reaction, ATP is used to activate the C2 atom of U34 by adenylation. After this, the persulfide sulfur on the catalytic cysteine is transferred to the C2 atom of the wobble base (U34) of mitochondrial tRNA(Lys), tRNA(Glu) and tRNA(Gln). The reaction probably involves hydrogen sulfide that is generated from the persulfide intermediate and that acts as a nucleophile towards the activated C2 atom on U34. Subsequently, a transient disulfide bond is formed between the two active site cysteine residues (By similarity).</text>
</comment>
<comment type="similarity">
    <text evidence="3">Belongs to the MnmA/TRMU family.</text>
</comment>
<dbReference type="EC" id="2.8.1.14" evidence="2"/>
<dbReference type="EMBL" id="CU329670">
    <property type="protein sequence ID" value="CAB11659.1"/>
    <property type="molecule type" value="Genomic_DNA"/>
</dbReference>
<dbReference type="PIR" id="T38324">
    <property type="entry name" value="T38324"/>
</dbReference>
<dbReference type="SMR" id="O13947"/>
<dbReference type="FunCoup" id="O13947">
    <property type="interactions" value="431"/>
</dbReference>
<dbReference type="STRING" id="284812.O13947"/>
<dbReference type="PaxDb" id="4896-SPAC23H4.04.1"/>
<dbReference type="EnsemblFungi" id="SPAC23H4.04.1">
    <property type="protein sequence ID" value="SPAC23H4.04.1:pep"/>
    <property type="gene ID" value="SPAC23H4.04"/>
</dbReference>
<dbReference type="KEGG" id="spo:2541868"/>
<dbReference type="PomBase" id="SPAC23H4.04"/>
<dbReference type="VEuPathDB" id="FungiDB:SPAC23H4.04"/>
<dbReference type="eggNOG" id="KOG2805">
    <property type="taxonomic scope" value="Eukaryota"/>
</dbReference>
<dbReference type="HOGENOM" id="CLU_035188_1_2_1"/>
<dbReference type="InParanoid" id="O13947"/>
<dbReference type="OMA" id="PFYVWDL"/>
<dbReference type="PhylomeDB" id="O13947"/>
<dbReference type="CD-CODE" id="576F0A76">
    <property type="entry name" value="Centrosome"/>
</dbReference>
<dbReference type="PRO" id="PR:O13947"/>
<dbReference type="Proteomes" id="UP000002485">
    <property type="component" value="Chromosome I"/>
</dbReference>
<dbReference type="GO" id="GO:0005739">
    <property type="term" value="C:mitochondrion"/>
    <property type="evidence" value="ECO:0007005"/>
    <property type="project" value="PomBase"/>
</dbReference>
<dbReference type="GO" id="GO:0005524">
    <property type="term" value="F:ATP binding"/>
    <property type="evidence" value="ECO:0007669"/>
    <property type="project" value="UniProtKB-KW"/>
</dbReference>
<dbReference type="GO" id="GO:0000049">
    <property type="term" value="F:tRNA binding"/>
    <property type="evidence" value="ECO:0007669"/>
    <property type="project" value="UniProtKB-KW"/>
</dbReference>
<dbReference type="GO" id="GO:0061708">
    <property type="term" value="F:tRNA-5-taurinomethyluridine 2-sulfurtransferase"/>
    <property type="evidence" value="ECO:0000266"/>
    <property type="project" value="PomBase"/>
</dbReference>
<dbReference type="GO" id="GO:0103016">
    <property type="term" value="F:tRNA-uridine 2-sulfurtransferase activity"/>
    <property type="evidence" value="ECO:0000303"/>
    <property type="project" value="PomBase"/>
</dbReference>
<dbReference type="GO" id="GO:1990799">
    <property type="term" value="P:mitochondrial tRNA wobble position uridine thiolation"/>
    <property type="evidence" value="ECO:0000266"/>
    <property type="project" value="PomBase"/>
</dbReference>
<dbReference type="GO" id="GO:0002143">
    <property type="term" value="P:tRNA wobble position uridine thiolation"/>
    <property type="evidence" value="ECO:0000318"/>
    <property type="project" value="GO_Central"/>
</dbReference>
<dbReference type="CDD" id="cd01998">
    <property type="entry name" value="MnmA_TRMU-like"/>
    <property type="match status" value="1"/>
</dbReference>
<dbReference type="Gene3D" id="2.30.30.280">
    <property type="entry name" value="Adenine nucleotide alpha hydrolases-like domains"/>
    <property type="match status" value="1"/>
</dbReference>
<dbReference type="Gene3D" id="3.40.50.620">
    <property type="entry name" value="HUPs"/>
    <property type="match status" value="1"/>
</dbReference>
<dbReference type="Gene3D" id="2.40.30.10">
    <property type="entry name" value="Translation factors"/>
    <property type="match status" value="1"/>
</dbReference>
<dbReference type="InterPro" id="IPR004506">
    <property type="entry name" value="MnmA-like"/>
</dbReference>
<dbReference type="InterPro" id="IPR046885">
    <property type="entry name" value="MnmA-like_C"/>
</dbReference>
<dbReference type="InterPro" id="IPR046884">
    <property type="entry name" value="MnmA-like_central"/>
</dbReference>
<dbReference type="InterPro" id="IPR023382">
    <property type="entry name" value="MnmA-like_central_sf"/>
</dbReference>
<dbReference type="InterPro" id="IPR014729">
    <property type="entry name" value="Rossmann-like_a/b/a_fold"/>
</dbReference>
<dbReference type="NCBIfam" id="NF001138">
    <property type="entry name" value="PRK00143.1"/>
    <property type="match status" value="1"/>
</dbReference>
<dbReference type="NCBIfam" id="TIGR00420">
    <property type="entry name" value="trmU"/>
    <property type="match status" value="1"/>
</dbReference>
<dbReference type="PANTHER" id="PTHR11933:SF5">
    <property type="entry name" value="MITOCHONDRIAL TRNA-SPECIFIC 2-THIOURIDYLASE 1"/>
    <property type="match status" value="1"/>
</dbReference>
<dbReference type="PANTHER" id="PTHR11933">
    <property type="entry name" value="TRNA 5-METHYLAMINOMETHYL-2-THIOURIDYLATE -METHYLTRANSFERASE"/>
    <property type="match status" value="1"/>
</dbReference>
<dbReference type="Pfam" id="PF03054">
    <property type="entry name" value="tRNA_Me_trans"/>
    <property type="match status" value="1"/>
</dbReference>
<dbReference type="Pfam" id="PF20258">
    <property type="entry name" value="tRNA_Me_trans_C"/>
    <property type="match status" value="1"/>
</dbReference>
<dbReference type="Pfam" id="PF20259">
    <property type="entry name" value="tRNA_Me_trans_M"/>
    <property type="match status" value="1"/>
</dbReference>
<dbReference type="SUPFAM" id="SSF52402">
    <property type="entry name" value="Adenine nucleotide alpha hydrolases-like"/>
    <property type="match status" value="1"/>
</dbReference>
<keyword id="KW-0067">ATP-binding</keyword>
<keyword id="KW-1015">Disulfide bond</keyword>
<keyword id="KW-0496">Mitochondrion</keyword>
<keyword id="KW-0547">Nucleotide-binding</keyword>
<keyword id="KW-1185">Reference proteome</keyword>
<keyword id="KW-0694">RNA-binding</keyword>
<keyword id="KW-0808">Transferase</keyword>
<keyword id="KW-0819">tRNA processing</keyword>
<keyword id="KW-0820">tRNA-binding</keyword>